<accession>O29986</accession>
<reference key="1">
    <citation type="journal article" date="1997" name="Nature">
        <title>The complete genome sequence of the hyperthermophilic, sulphate-reducing archaeon Archaeoglobus fulgidus.</title>
        <authorList>
            <person name="Klenk H.-P."/>
            <person name="Clayton R.A."/>
            <person name="Tomb J.-F."/>
            <person name="White O."/>
            <person name="Nelson K.E."/>
            <person name="Ketchum K.A."/>
            <person name="Dodson R.J."/>
            <person name="Gwinn M.L."/>
            <person name="Hickey E.K."/>
            <person name="Peterson J.D."/>
            <person name="Richardson D.L."/>
            <person name="Kerlavage A.R."/>
            <person name="Graham D.E."/>
            <person name="Kyrpides N.C."/>
            <person name="Fleischmann R.D."/>
            <person name="Quackenbush J."/>
            <person name="Lee N.H."/>
            <person name="Sutton G.G."/>
            <person name="Gill S.R."/>
            <person name="Kirkness E.F."/>
            <person name="Dougherty B.A."/>
            <person name="McKenney K."/>
            <person name="Adams M.D."/>
            <person name="Loftus B.J."/>
            <person name="Peterson S.N."/>
            <person name="Reich C.I."/>
            <person name="McNeil L.K."/>
            <person name="Badger J.H."/>
            <person name="Glodek A."/>
            <person name="Zhou L."/>
            <person name="Overbeek R."/>
            <person name="Gocayne J.D."/>
            <person name="Weidman J.F."/>
            <person name="McDonald L.A."/>
            <person name="Utterback T.R."/>
            <person name="Cotton M.D."/>
            <person name="Spriggs T."/>
            <person name="Artiach P."/>
            <person name="Kaine B.P."/>
            <person name="Sykes S.M."/>
            <person name="Sadow P.W."/>
            <person name="D'Andrea K.P."/>
            <person name="Bowman C."/>
            <person name="Fujii C."/>
            <person name="Garland S.A."/>
            <person name="Mason T.M."/>
            <person name="Olsen G.J."/>
            <person name="Fraser C.M."/>
            <person name="Smith H.O."/>
            <person name="Woese C.R."/>
            <person name="Venter J.C."/>
        </authorList>
    </citation>
    <scope>NUCLEOTIDE SEQUENCE [LARGE SCALE GENOMIC DNA]</scope>
    <source>
        <strain>ATCC 49558 / DSM 4304 / JCM 9628 / NBRC 100126 / VC-16</strain>
    </source>
</reference>
<evidence type="ECO:0000250" key="1"/>
<evidence type="ECO:0000305" key="2"/>
<proteinExistence type="inferred from homology"/>
<sequence>MDVEKFVENAIKEIRERVKDGKAIIALSGGVDSSVCTVLAHKALGDRLIPVFVDTGLMREGEPEKIKEIFGNMGLVFIDAKEEFFKALKGVTDPEEKRKVIGELFVRIFERVAEEHNAEYLIQGTIYPDIIESQGGIKSHHNVGGFPTSYKFKDVIEPLRELYKDEVREVARYLGLPKEISERMPFPGPGLAVRIVGEVTPEKVEIVRKANKIVEEELADYDKWQCFAALIGKATGVKGDVRVWGYIIAVRAVESRDGMTADPIKIDYDRLRRIALRITGEIDKVSRVVYDITPKPPATIEYE</sequence>
<name>GUAAB_ARCFU</name>
<keyword id="KW-0067">ATP-binding</keyword>
<keyword id="KW-0332">GMP biosynthesis</keyword>
<keyword id="KW-0436">Ligase</keyword>
<keyword id="KW-0547">Nucleotide-binding</keyword>
<keyword id="KW-0658">Purine biosynthesis</keyword>
<keyword id="KW-1185">Reference proteome</keyword>
<comment type="function">
    <text evidence="1">Catalyzes the synthesis of GMP from XMP.</text>
</comment>
<comment type="catalytic activity">
    <reaction>
        <text>XMP + L-glutamine + ATP + H2O = GMP + L-glutamate + AMP + diphosphate + 2 H(+)</text>
        <dbReference type="Rhea" id="RHEA:11680"/>
        <dbReference type="ChEBI" id="CHEBI:15377"/>
        <dbReference type="ChEBI" id="CHEBI:15378"/>
        <dbReference type="ChEBI" id="CHEBI:29985"/>
        <dbReference type="ChEBI" id="CHEBI:30616"/>
        <dbReference type="ChEBI" id="CHEBI:33019"/>
        <dbReference type="ChEBI" id="CHEBI:57464"/>
        <dbReference type="ChEBI" id="CHEBI:58115"/>
        <dbReference type="ChEBI" id="CHEBI:58359"/>
        <dbReference type="ChEBI" id="CHEBI:456215"/>
        <dbReference type="EC" id="6.3.5.2"/>
    </reaction>
</comment>
<comment type="pathway">
    <text>Purine metabolism; GMP biosynthesis; GMP from XMP (L-Gln route): step 1/1.</text>
</comment>
<comment type="subunit">
    <text evidence="2">Heterodimer composed of a glutamine amidotransferase subunit (A) and a GMP-binding subunit (B).</text>
</comment>
<protein>
    <recommendedName>
        <fullName>GMP synthase [glutamine-hydrolyzing] subunit B</fullName>
        <ecNumber>6.3.5.2</ecNumber>
    </recommendedName>
    <alternativeName>
        <fullName>GMP synthetase</fullName>
    </alternativeName>
</protein>
<organism>
    <name type="scientific">Archaeoglobus fulgidus (strain ATCC 49558 / DSM 4304 / JCM 9628 / NBRC 100126 / VC-16)</name>
    <dbReference type="NCBI Taxonomy" id="224325"/>
    <lineage>
        <taxon>Archaea</taxon>
        <taxon>Methanobacteriati</taxon>
        <taxon>Methanobacteriota</taxon>
        <taxon>Archaeoglobi</taxon>
        <taxon>Archaeoglobales</taxon>
        <taxon>Archaeoglobaceae</taxon>
        <taxon>Archaeoglobus</taxon>
    </lineage>
</organism>
<gene>
    <name type="primary">guaAB</name>
    <name type="synonym">guaA-1</name>
    <name type="ordered locus">AF_0253</name>
</gene>
<feature type="chain" id="PRO_0000140237" description="GMP synthase [glutamine-hydrolyzing] subunit B">
    <location>
        <begin position="1"/>
        <end position="303"/>
    </location>
</feature>
<feature type="domain" description="GMPS ATP-PPase">
    <location>
        <begin position="1"/>
        <end position="183"/>
    </location>
</feature>
<feature type="binding site" evidence="1">
    <location>
        <begin position="28"/>
        <end position="34"/>
    </location>
    <ligand>
        <name>ATP</name>
        <dbReference type="ChEBI" id="CHEBI:30616"/>
    </ligand>
</feature>
<dbReference type="EC" id="6.3.5.2"/>
<dbReference type="EMBL" id="AE000782">
    <property type="protein sequence ID" value="AAB90977.1"/>
    <property type="molecule type" value="Genomic_DNA"/>
</dbReference>
<dbReference type="PIR" id="E69281">
    <property type="entry name" value="E69281"/>
</dbReference>
<dbReference type="SMR" id="O29986"/>
<dbReference type="STRING" id="224325.AF_0253"/>
<dbReference type="PaxDb" id="224325-AF_0253"/>
<dbReference type="EnsemblBacteria" id="AAB90977">
    <property type="protein sequence ID" value="AAB90977"/>
    <property type="gene ID" value="AF_0253"/>
</dbReference>
<dbReference type="KEGG" id="afu:AF_0253"/>
<dbReference type="eggNOG" id="arCOG00085">
    <property type="taxonomic scope" value="Archaea"/>
</dbReference>
<dbReference type="HOGENOM" id="CLU_014340_0_0_2"/>
<dbReference type="OrthoDB" id="33844at2157"/>
<dbReference type="PhylomeDB" id="O29986"/>
<dbReference type="UniPathway" id="UPA00189">
    <property type="reaction ID" value="UER00296"/>
</dbReference>
<dbReference type="Proteomes" id="UP000002199">
    <property type="component" value="Chromosome"/>
</dbReference>
<dbReference type="GO" id="GO:0005829">
    <property type="term" value="C:cytosol"/>
    <property type="evidence" value="ECO:0007669"/>
    <property type="project" value="TreeGrafter"/>
</dbReference>
<dbReference type="GO" id="GO:0005524">
    <property type="term" value="F:ATP binding"/>
    <property type="evidence" value="ECO:0007669"/>
    <property type="project" value="UniProtKB-UniRule"/>
</dbReference>
<dbReference type="GO" id="GO:0003921">
    <property type="term" value="F:GMP synthase activity"/>
    <property type="evidence" value="ECO:0007669"/>
    <property type="project" value="InterPro"/>
</dbReference>
<dbReference type="CDD" id="cd01997">
    <property type="entry name" value="GMP_synthase_C"/>
    <property type="match status" value="1"/>
</dbReference>
<dbReference type="FunFam" id="3.30.300.10:FF:000002">
    <property type="entry name" value="GMP synthase [glutamine-hydrolyzing]"/>
    <property type="match status" value="1"/>
</dbReference>
<dbReference type="FunFam" id="3.40.50.620:FF:000208">
    <property type="entry name" value="GMP synthase [glutamine-hydrolyzing] subunit B"/>
    <property type="match status" value="1"/>
</dbReference>
<dbReference type="Gene3D" id="3.30.300.10">
    <property type="match status" value="1"/>
</dbReference>
<dbReference type="Gene3D" id="3.40.50.620">
    <property type="entry name" value="HUPs"/>
    <property type="match status" value="1"/>
</dbReference>
<dbReference type="HAMAP" id="MF_00345">
    <property type="entry name" value="GMP_synthase_B"/>
    <property type="match status" value="1"/>
</dbReference>
<dbReference type="InterPro" id="IPR001674">
    <property type="entry name" value="GMP_synth_C"/>
</dbReference>
<dbReference type="InterPro" id="IPR026598">
    <property type="entry name" value="GMP_synthase_B"/>
</dbReference>
<dbReference type="InterPro" id="IPR025777">
    <property type="entry name" value="GMPS_ATP_PPase_dom"/>
</dbReference>
<dbReference type="InterPro" id="IPR022310">
    <property type="entry name" value="NAD/GMP_synthase"/>
</dbReference>
<dbReference type="InterPro" id="IPR014729">
    <property type="entry name" value="Rossmann-like_a/b/a_fold"/>
</dbReference>
<dbReference type="NCBIfam" id="TIGR00884">
    <property type="entry name" value="guaA_Cterm"/>
    <property type="match status" value="1"/>
</dbReference>
<dbReference type="PANTHER" id="PTHR11922:SF2">
    <property type="entry name" value="GMP SYNTHASE [GLUTAMINE-HYDROLYZING]"/>
    <property type="match status" value="1"/>
</dbReference>
<dbReference type="PANTHER" id="PTHR11922">
    <property type="entry name" value="GMP SYNTHASE-RELATED"/>
    <property type="match status" value="1"/>
</dbReference>
<dbReference type="Pfam" id="PF00958">
    <property type="entry name" value="GMP_synt_C"/>
    <property type="match status" value="1"/>
</dbReference>
<dbReference type="Pfam" id="PF02540">
    <property type="entry name" value="NAD_synthase"/>
    <property type="match status" value="1"/>
</dbReference>
<dbReference type="SUPFAM" id="SSF52402">
    <property type="entry name" value="Adenine nucleotide alpha hydrolases-like"/>
    <property type="match status" value="1"/>
</dbReference>
<dbReference type="SUPFAM" id="SSF54810">
    <property type="entry name" value="GMP synthetase C-terminal dimerisation domain"/>
    <property type="match status" value="1"/>
</dbReference>
<dbReference type="PROSITE" id="PS51553">
    <property type="entry name" value="GMPS_ATP_PPASE"/>
    <property type="match status" value="1"/>
</dbReference>